<keyword id="KW-0002">3D-structure</keyword>
<keyword id="KW-0067">ATP-binding</keyword>
<keyword id="KW-0378">Hydrolase</keyword>
<keyword id="KW-0460">Magnesium</keyword>
<keyword id="KW-0479">Metal-binding</keyword>
<keyword id="KW-0547">Nucleotide-binding</keyword>
<keyword id="KW-1185">Reference proteome</keyword>
<proteinExistence type="evidence at protein level"/>
<sequence length="159" mass="17569">MEHDERTHVPVELRAAGVVLLNERGDILLVQEKGIPGHPEKAGLWHIPSGAVEDGENPQDAAVREACEETGLRVRPVKFLGAYLGRFPDGVLILRHVWLAEPEPGQTLAPAFTDEIAEASFVSREDFAQLYAAGQIRMYQTKLFYADALREKGFPALPV</sequence>
<protein>
    <recommendedName>
        <fullName evidence="6 7">Nudix hydrolase DR_1025</fullName>
        <ecNumber evidence="5">3.6.1.61</ecNumber>
        <ecNumber evidence="5">3.6.1.69</ecNumber>
    </recommendedName>
    <alternativeName>
        <fullName evidence="6">MutT-like DR_1025</fullName>
    </alternativeName>
    <alternativeName>
        <fullName evidence="9">MutT/nudix family protein</fullName>
    </alternativeName>
</protein>
<reference evidence="9 10" key="1">
    <citation type="journal article" date="1999" name="Science">
        <title>Genome sequence of the radioresistant bacterium Deinococcus radiodurans R1.</title>
        <authorList>
            <person name="White O."/>
            <person name="Eisen J.A."/>
            <person name="Heidelberg J.F."/>
            <person name="Hickey E.K."/>
            <person name="Peterson J.D."/>
            <person name="Dodson R.J."/>
            <person name="Haft D.H."/>
            <person name="Gwinn M.L."/>
            <person name="Nelson W.C."/>
            <person name="Richardson D.L."/>
            <person name="Moffat K.S."/>
            <person name="Qin H."/>
            <person name="Jiang L."/>
            <person name="Pamphile W."/>
            <person name="Crosby M."/>
            <person name="Shen M."/>
            <person name="Vamathevan J.J."/>
            <person name="Lam P."/>
            <person name="McDonald L.A."/>
            <person name="Utterback T.R."/>
            <person name="Zalewski C."/>
            <person name="Makarova K.S."/>
            <person name="Aravind L."/>
            <person name="Daly M.J."/>
            <person name="Minton K.W."/>
            <person name="Fleischmann R.D."/>
            <person name="Ketchum K.A."/>
            <person name="Nelson K.E."/>
            <person name="Salzberg S.L."/>
            <person name="Smith H.O."/>
            <person name="Venter J.C."/>
            <person name="Fraser C.M."/>
        </authorList>
    </citation>
    <scope>NUCLEOTIDE SEQUENCE [LARGE SCALE GENOMIC DNA]</scope>
    <source>
        <strain evidence="10">ATCC 13939 / DSM 20539 / JCM 16871 / CCUG 27074 / LMG 4051 / NBRC 15346 / NCIMB 9279 / VKM B-1422 / R1</strain>
    </source>
</reference>
<reference key="2">
    <citation type="journal article" date="2003" name="Acta Crystallogr. D">
        <title>Purification, crystallization and preliminary X-ray analysis of two nudix hydrolases from Deinococcus radiodurans.</title>
        <authorList>
            <person name="Holbrook E.L."/>
            <person name="Schulze-Gahmen U."/>
            <person name="Buchko G.W."/>
            <person name="Ni S."/>
            <person name="Kennedy M.A."/>
            <person name="Holbrook S.R."/>
        </authorList>
    </citation>
    <scope>SUBUNIT</scope>
    <scope>CRYSTALLIZATION</scope>
</reference>
<reference key="3">
    <citation type="journal article" date="2013" name="Anal. Biochem.">
        <title>A continuous fluorescence assay for the characterization of Nudix hydrolases.</title>
        <authorList>
            <person name="Xu A."/>
            <person name="Desai A.M."/>
            <person name="Brenner S.E."/>
            <person name="Kirsch J.F."/>
        </authorList>
    </citation>
    <scope>FUNCTION</scope>
    <scope>CATALYTIC ACTIVITY</scope>
    <scope>BIOPHYSICOCHEMICAL PROPERTIES</scope>
    <scope>SUBSTRATE SPECIFICITY</scope>
</reference>
<reference evidence="11 12 13 14" key="4">
    <citation type="journal article" date="2004" name="J. Mol. Biol.">
        <title>Structural studies of the Nudix hydrolase DR1025 from Deinococcus radiodurans and its ligand complexes.</title>
        <authorList>
            <person name="Ranatunga W."/>
            <person name="Hill E.E."/>
            <person name="Mooster J.L."/>
            <person name="Holbrook E.L."/>
            <person name="Schulze-Gahmen U."/>
            <person name="Xu W."/>
            <person name="Bessman M.J."/>
            <person name="Brenner S.E."/>
            <person name="Holbrook S.R."/>
        </authorList>
    </citation>
    <scope>X-RAY CRYSTALLOGRAPHY (1.39 ANGSTROMS) AND IN COMPLEXES WITH ATP; GTP ANALOG; MAGNESIUM AND SAMARIUM</scope>
    <scope>COFACTOR</scope>
    <scope>SUBUNIT</scope>
</reference>
<dbReference type="EC" id="3.6.1.61" evidence="5"/>
<dbReference type="EC" id="3.6.1.69" evidence="5"/>
<dbReference type="EMBL" id="AE000513">
    <property type="protein sequence ID" value="AAF10599.1"/>
    <property type="molecule type" value="Genomic_DNA"/>
</dbReference>
<dbReference type="PIR" id="C75446">
    <property type="entry name" value="C75446"/>
</dbReference>
<dbReference type="RefSeq" id="NP_294749.1">
    <property type="nucleotide sequence ID" value="NC_001263.1"/>
</dbReference>
<dbReference type="RefSeq" id="WP_010887668.1">
    <property type="nucleotide sequence ID" value="NC_001263.1"/>
</dbReference>
<dbReference type="PDB" id="1SJY">
    <property type="method" value="X-ray"/>
    <property type="resolution" value="1.39 A"/>
    <property type="chains" value="A=1-159"/>
</dbReference>
<dbReference type="PDB" id="1SOI">
    <property type="method" value="X-ray"/>
    <property type="resolution" value="1.80 A"/>
    <property type="chains" value="A=1-159"/>
</dbReference>
<dbReference type="PDB" id="1SU2">
    <property type="method" value="X-ray"/>
    <property type="resolution" value="1.60 A"/>
    <property type="chains" value="A/B=1-159"/>
</dbReference>
<dbReference type="PDB" id="1SZ3">
    <property type="method" value="X-ray"/>
    <property type="resolution" value="1.60 A"/>
    <property type="chains" value="A/B=1-159"/>
</dbReference>
<dbReference type="PDBsum" id="1SJY"/>
<dbReference type="PDBsum" id="1SOI"/>
<dbReference type="PDBsum" id="1SU2"/>
<dbReference type="PDBsum" id="1SZ3"/>
<dbReference type="SMR" id="Q9RVK2"/>
<dbReference type="FunCoup" id="Q9RVK2">
    <property type="interactions" value="67"/>
</dbReference>
<dbReference type="STRING" id="243230.DR_1025"/>
<dbReference type="PaxDb" id="243230-DR_1025"/>
<dbReference type="EnsemblBacteria" id="AAF10599">
    <property type="protein sequence ID" value="AAF10599"/>
    <property type="gene ID" value="DR_1025"/>
</dbReference>
<dbReference type="GeneID" id="69517270"/>
<dbReference type="KEGG" id="dra:DR_1025"/>
<dbReference type="PATRIC" id="fig|243230.17.peg.1217"/>
<dbReference type="eggNOG" id="COG1051">
    <property type="taxonomic scope" value="Bacteria"/>
</dbReference>
<dbReference type="HOGENOM" id="CLU_1692614_0_0_0"/>
<dbReference type="InParanoid" id="Q9RVK2"/>
<dbReference type="OrthoDB" id="9787476at2"/>
<dbReference type="EvolutionaryTrace" id="Q9RVK2"/>
<dbReference type="Proteomes" id="UP000002524">
    <property type="component" value="Chromosome 1"/>
</dbReference>
<dbReference type="GO" id="GO:0005524">
    <property type="term" value="F:ATP binding"/>
    <property type="evidence" value="ECO:0007669"/>
    <property type="project" value="UniProtKB-KW"/>
</dbReference>
<dbReference type="GO" id="GO:0016787">
    <property type="term" value="F:hydrolase activity"/>
    <property type="evidence" value="ECO:0007669"/>
    <property type="project" value="UniProtKB-KW"/>
</dbReference>
<dbReference type="GO" id="GO:0046872">
    <property type="term" value="F:metal ion binding"/>
    <property type="evidence" value="ECO:0007669"/>
    <property type="project" value="UniProtKB-KW"/>
</dbReference>
<dbReference type="CDD" id="cd04700">
    <property type="entry name" value="NUDIX_DR1025_like"/>
    <property type="match status" value="1"/>
</dbReference>
<dbReference type="Gene3D" id="3.90.79.10">
    <property type="entry name" value="Nucleoside Triphosphate Pyrophosphohydrolase"/>
    <property type="match status" value="1"/>
</dbReference>
<dbReference type="InterPro" id="IPR048157">
    <property type="entry name" value="Nud_hyd_Dein"/>
</dbReference>
<dbReference type="InterPro" id="IPR020476">
    <property type="entry name" value="Nudix_hydrolase"/>
</dbReference>
<dbReference type="InterPro" id="IPR015797">
    <property type="entry name" value="NUDIX_hydrolase-like_dom_sf"/>
</dbReference>
<dbReference type="InterPro" id="IPR020084">
    <property type="entry name" value="NUDIX_hydrolase_CS"/>
</dbReference>
<dbReference type="InterPro" id="IPR000086">
    <property type="entry name" value="NUDIX_hydrolase_dom"/>
</dbReference>
<dbReference type="NCBIfam" id="NF041652">
    <property type="entry name" value="Nud_hyd_Dein"/>
    <property type="match status" value="1"/>
</dbReference>
<dbReference type="PANTHER" id="PTHR43736">
    <property type="entry name" value="ADP-RIBOSE PYROPHOSPHATASE"/>
    <property type="match status" value="1"/>
</dbReference>
<dbReference type="PANTHER" id="PTHR43736:SF1">
    <property type="entry name" value="DIHYDRONEOPTERIN TRIPHOSPHATE DIPHOSPHATASE"/>
    <property type="match status" value="1"/>
</dbReference>
<dbReference type="Pfam" id="PF00293">
    <property type="entry name" value="NUDIX"/>
    <property type="match status" value="1"/>
</dbReference>
<dbReference type="PRINTS" id="PR00502">
    <property type="entry name" value="NUDIXFAMILY"/>
</dbReference>
<dbReference type="SUPFAM" id="SSF55811">
    <property type="entry name" value="Nudix"/>
    <property type="match status" value="1"/>
</dbReference>
<dbReference type="PROSITE" id="PS51462">
    <property type="entry name" value="NUDIX"/>
    <property type="match status" value="1"/>
</dbReference>
<dbReference type="PROSITE" id="PS00893">
    <property type="entry name" value="NUDIX_BOX"/>
    <property type="match status" value="1"/>
</dbReference>
<name>Y1025_DEIRA</name>
<gene>
    <name evidence="9" type="ordered locus">DR_1025</name>
</gene>
<feature type="chain" id="PRO_0000455561" description="Nudix hydrolase DR_1025">
    <location>
        <begin position="1"/>
        <end position="159"/>
    </location>
</feature>
<feature type="domain" description="Nudix hydrolase" evidence="1">
    <location>
        <begin position="11"/>
        <end position="144"/>
    </location>
</feature>
<feature type="short sequence motif" description="Nudix box" evidence="1 8">
    <location>
        <begin position="50"/>
        <end position="71"/>
    </location>
</feature>
<feature type="binding site" evidence="4 13 14">
    <location>
        <begin position="1"/>
        <end position="6"/>
    </location>
    <ligand>
        <name>ATP</name>
        <dbReference type="ChEBI" id="CHEBI:30616"/>
    </ligand>
</feature>
<feature type="binding site" evidence="4 13">
    <location>
        <position position="1"/>
    </location>
    <ligand>
        <name>Mg(2+)</name>
        <dbReference type="ChEBI" id="CHEBI:18420"/>
        <label>1</label>
    </ligand>
</feature>
<feature type="binding site" evidence="4 13">
    <location>
        <position position="14"/>
    </location>
    <ligand>
        <name>Mg(2+)</name>
        <dbReference type="ChEBI" id="CHEBI:18420"/>
        <label>3</label>
    </ligand>
</feature>
<feature type="binding site" evidence="4 13">
    <location>
        <position position="49"/>
    </location>
    <ligand>
        <name>Mg(2+)</name>
        <dbReference type="ChEBI" id="CHEBI:18420"/>
        <label>1</label>
    </ligand>
</feature>
<feature type="binding site" evidence="4 13 14">
    <location>
        <begin position="50"/>
        <end position="51"/>
    </location>
    <ligand>
        <name>ATP</name>
        <dbReference type="ChEBI" id="CHEBI:30616"/>
    </ligand>
</feature>
<feature type="binding site" evidence="4 13">
    <location>
        <position position="53"/>
    </location>
    <ligand>
        <name>Mg(2+)</name>
        <dbReference type="ChEBI" id="CHEBI:18420"/>
        <label>2</label>
    </ligand>
</feature>
<feature type="binding site" evidence="4 13 14">
    <location>
        <position position="65"/>
    </location>
    <ligand>
        <name>Mg(2+)</name>
        <dbReference type="ChEBI" id="CHEBI:18420"/>
        <label>2</label>
    </ligand>
</feature>
<feature type="binding site" evidence="4 13 14">
    <location>
        <begin position="87"/>
        <end position="89"/>
    </location>
    <ligand>
        <name>ATP</name>
        <dbReference type="ChEBI" id="CHEBI:30616"/>
    </ligand>
</feature>
<feature type="binding site" evidence="4 13">
    <location>
        <position position="95"/>
    </location>
    <ligand>
        <name>Mg(2+)</name>
        <dbReference type="ChEBI" id="CHEBI:18420"/>
        <label>1</label>
    </ligand>
</feature>
<feature type="strand" evidence="15">
    <location>
        <begin position="13"/>
        <end position="21"/>
    </location>
</feature>
<feature type="strand" evidence="15">
    <location>
        <begin position="27"/>
        <end position="33"/>
    </location>
</feature>
<feature type="strand" evidence="16">
    <location>
        <begin position="36"/>
        <end position="39"/>
    </location>
</feature>
<feature type="strand" evidence="15">
    <location>
        <begin position="48"/>
        <end position="51"/>
    </location>
</feature>
<feature type="helix" evidence="15">
    <location>
        <begin position="58"/>
        <end position="70"/>
    </location>
</feature>
<feature type="strand" evidence="15">
    <location>
        <begin position="74"/>
        <end position="86"/>
    </location>
</feature>
<feature type="strand" evidence="15">
    <location>
        <begin position="92"/>
        <end position="102"/>
    </location>
</feature>
<feature type="strand" evidence="15">
    <location>
        <begin position="114"/>
        <end position="122"/>
    </location>
</feature>
<feature type="helix" evidence="15">
    <location>
        <begin position="124"/>
        <end position="132"/>
    </location>
</feature>
<feature type="helix" evidence="15">
    <location>
        <begin position="140"/>
        <end position="152"/>
    </location>
</feature>
<organism evidence="9 10">
    <name type="scientific">Deinococcus radiodurans (strain ATCC 13939 / DSM 20539 / JCM 16871 / CCUG 27074 / LMG 4051 / NBRC 15346 / NCIMB 9279 / VKM B-1422 / R1)</name>
    <dbReference type="NCBI Taxonomy" id="243230"/>
    <lineage>
        <taxon>Bacteria</taxon>
        <taxon>Thermotogati</taxon>
        <taxon>Deinococcota</taxon>
        <taxon>Deinococci</taxon>
        <taxon>Deinococcales</taxon>
        <taxon>Deinococcaceae</taxon>
        <taxon>Deinococcus</taxon>
    </lineage>
</organism>
<evidence type="ECO:0000255" key="1">
    <source>
        <dbReference type="PROSITE-ProRule" id="PRU00794"/>
    </source>
</evidence>
<evidence type="ECO:0000255" key="2">
    <source>
        <dbReference type="RuleBase" id="RU003476"/>
    </source>
</evidence>
<evidence type="ECO:0000269" key="3">
    <source>
    </source>
</evidence>
<evidence type="ECO:0000269" key="4">
    <source>
    </source>
</evidence>
<evidence type="ECO:0000269" key="5">
    <source>
    </source>
</evidence>
<evidence type="ECO:0000303" key="6">
    <source>
    </source>
</evidence>
<evidence type="ECO:0000303" key="7">
    <source>
    </source>
</evidence>
<evidence type="ECO:0000305" key="8">
    <source>
    </source>
</evidence>
<evidence type="ECO:0000312" key="9">
    <source>
        <dbReference type="EMBL" id="AAF10599.1"/>
    </source>
</evidence>
<evidence type="ECO:0000312" key="10">
    <source>
        <dbReference type="Proteomes" id="UP000002524"/>
    </source>
</evidence>
<evidence type="ECO:0007744" key="11">
    <source>
        <dbReference type="PDB" id="1SJY"/>
    </source>
</evidence>
<evidence type="ECO:0007744" key="12">
    <source>
        <dbReference type="PDB" id="1SOI"/>
    </source>
</evidence>
<evidence type="ECO:0007744" key="13">
    <source>
        <dbReference type="PDB" id="1SU2"/>
    </source>
</evidence>
<evidence type="ECO:0007744" key="14">
    <source>
        <dbReference type="PDB" id="1SZ3"/>
    </source>
</evidence>
<evidence type="ECO:0007829" key="15">
    <source>
        <dbReference type="PDB" id="1SJY"/>
    </source>
</evidence>
<evidence type="ECO:0007829" key="16">
    <source>
        <dbReference type="PDB" id="1SU2"/>
    </source>
</evidence>
<comment type="function">
    <text evidence="5">Hydrolase that can act as a nucleoside triphosphatase and a dinucleoside polyphosphate pyrophosphatase. The best substrates are 8-oxo-dGTP and 8-oxo-GTP. Other substrates include Ap4A, dGTP and GTP. May be involved in protection from damage caused by radiation.</text>
</comment>
<comment type="catalytic activity">
    <reaction evidence="5">
        <text>8-oxo-dGTP + H2O = 8-oxo-dGDP + phosphate + H(+)</text>
        <dbReference type="Rhea" id="RHEA:59980"/>
        <dbReference type="ChEBI" id="CHEBI:15377"/>
        <dbReference type="ChEBI" id="CHEBI:15378"/>
        <dbReference type="ChEBI" id="CHEBI:43474"/>
        <dbReference type="ChEBI" id="CHEBI:63715"/>
        <dbReference type="ChEBI" id="CHEBI:77896"/>
        <dbReference type="EC" id="3.6.1.69"/>
    </reaction>
</comment>
<comment type="catalytic activity">
    <reaction evidence="5">
        <text>8-oxo-GTP + H2O = 8-oxo-GDP + phosphate + H(+)</text>
        <dbReference type="Rhea" id="RHEA:60032"/>
        <dbReference type="ChEBI" id="CHEBI:15377"/>
        <dbReference type="ChEBI" id="CHEBI:15378"/>
        <dbReference type="ChEBI" id="CHEBI:43474"/>
        <dbReference type="ChEBI" id="CHEBI:143553"/>
        <dbReference type="ChEBI" id="CHEBI:143554"/>
        <dbReference type="EC" id="3.6.1.69"/>
    </reaction>
</comment>
<comment type="catalytic activity">
    <reaction evidence="5">
        <text>P(1),P(4)-bis(5'-adenosyl) tetraphosphate + H2O = AMP + ATP + 2 H(+)</text>
        <dbReference type="Rhea" id="RHEA:32039"/>
        <dbReference type="ChEBI" id="CHEBI:15377"/>
        <dbReference type="ChEBI" id="CHEBI:15378"/>
        <dbReference type="ChEBI" id="CHEBI:30616"/>
        <dbReference type="ChEBI" id="CHEBI:58141"/>
        <dbReference type="ChEBI" id="CHEBI:456215"/>
        <dbReference type="EC" id="3.6.1.61"/>
    </reaction>
</comment>
<comment type="cofactor">
    <cofactor evidence="4">
        <name>Mg(2+)</name>
        <dbReference type="ChEBI" id="CHEBI:18420"/>
    </cofactor>
    <text evidence="5">Binds 3 Mg(2+) ions per subunit.</text>
</comment>
<comment type="biophysicochemical properties">
    <kinetics>
        <KM evidence="5">26 uM for 8-oxo-dGTP (at pH 7.6 and 37 degrees Celsius as measured by the Pi sensor assay)</KM>
        <KM evidence="5">28 uM for 8-oxo-dGTP (at pH 7.6 and 37 degrees Celsius as measured by the Fiske-SubbaRow assay)</KM>
        <KM evidence="5">22 uM for 8-oxo-GTP (at pH 7.6 and 37 degrees Celsius)</KM>
        <text evidence="5">kcat is 0.18 sec(-1) with 8-oxo-dGTP as substrate measured by the Pi sensor assay. kcat is 0.29 sec(-1) with 8-oxo-dGTP as substrate measured by the Fiske-SubbaRow assay. kcat is 0.13 sec(-1) with 8-oxo-GTP as substrate.</text>
    </kinetics>
</comment>
<comment type="subunit">
    <text evidence="3 4">Homodimer.</text>
</comment>
<comment type="similarity">
    <text evidence="2">Belongs to the Nudix hydrolase family.</text>
</comment>
<accession>Q9RVK2</accession>